<comment type="function">
    <text evidence="1">Sialidase inhibitor. Competitively inhibits bacterial sialidases, but not viral sialidases. Does not inhibit glycosidases or proteases. Has no antitumor activity.</text>
</comment>
<comment type="domain">
    <text>The presence of a 'disulfide through disulfide knot' structurally defines this protein as a knottin.</text>
</comment>
<comment type="mass spectrometry"/>
<organism>
    <name type="scientific">Asteropus simplex</name>
    <name type="common">Marine sponge</name>
    <name type="synonym">Stellettinopsis simplex</name>
    <dbReference type="NCBI Taxonomy" id="350939"/>
    <lineage>
        <taxon>Eukaryota</taxon>
        <taxon>Metazoa</taxon>
        <taxon>Porifera</taxon>
        <taxon>Demospongiae</taxon>
        <taxon>Heteroscleromorpha</taxon>
        <taxon>Tetractinellida</taxon>
        <taxon>Astrophorina</taxon>
        <taxon>Ancorinidae</taxon>
        <taxon>Asteropus</taxon>
    </lineage>
</organism>
<proteinExistence type="evidence at protein level"/>
<feature type="peptide" id="PRO_0000249178" description="Asteropin-A">
    <location>
        <begin position="1"/>
        <end position="36"/>
    </location>
</feature>
<feature type="disulfide bond" evidence="1">
    <location>
        <begin position="2"/>
        <end position="18"/>
    </location>
</feature>
<feature type="disulfide bond" evidence="1">
    <location>
        <begin position="9"/>
        <end position="25"/>
    </location>
</feature>
<feature type="disulfide bond" evidence="1">
    <location>
        <begin position="17"/>
        <end position="35"/>
    </location>
</feature>
<name>ASTAE_ASTSM</name>
<sequence>YCGLFGDLCTLDGTLACCIALELECIPLNDFVGICL</sequence>
<evidence type="ECO:0000269" key="1">
    <source>
    </source>
</evidence>
<evidence type="ECO:0000305" key="2"/>
<accession>P84702</accession>
<protein>
    <recommendedName>
        <fullName>Asteropin-A</fullName>
    </recommendedName>
    <alternativeName>
        <fullName>Asteropine-A</fullName>
    </alternativeName>
</protein>
<reference evidence="2" key="1">
    <citation type="journal article" date="2006" name="Chem. Biol.">
        <title>Asteropine A, a sialidase-inhibiting conotoxin-like peptide from the marine sponge Asteropus simplex.</title>
        <authorList>
            <person name="Takada K."/>
            <person name="Hamada T."/>
            <person name="Hirota H."/>
            <person name="Nakao Y."/>
            <person name="Matsunaga S."/>
            <person name="van Soest R.W.M."/>
            <person name="Fusetani N."/>
        </authorList>
    </citation>
    <scope>PROTEIN SEQUENCE</scope>
    <scope>FUNCTION</scope>
    <scope>MASS SPECTROMETRY</scope>
    <scope>STRUCTURE BY NMR</scope>
    <scope>DISULFIDE BONDS</scope>
</reference>
<keyword id="KW-0903">Direct protein sequencing</keyword>
<keyword id="KW-1015">Disulfide bond</keyword>
<keyword id="KW-0960">Knottin</keyword>